<accession>Q6LVS4</accession>
<sequence length="180" mass="20515">MSKFKQLYKPLLDNAQWETPLSLAIEGTAFGHWLLEPNSLSRRLQRHCDEFTVSLIEQKKIDSTMLSADERELIGDVDCLLRKVVLMGDGQPWVFARTLIPLSTLTGQESDLEQLGEMPLGFRVFTDRSARRDALEVANTGTQAQPLWARRSRLWINNKPLLVAELFLAQAPVYSKEKQC</sequence>
<dbReference type="EC" id="4.1.3.40" evidence="1"/>
<dbReference type="EMBL" id="CR378663">
    <property type="protein sequence ID" value="CAG18601.1"/>
    <property type="molecule type" value="Genomic_DNA"/>
</dbReference>
<dbReference type="RefSeq" id="WP_011216979.1">
    <property type="nucleotide sequence ID" value="NC_006370.1"/>
</dbReference>
<dbReference type="SMR" id="Q6LVS4"/>
<dbReference type="STRING" id="298386.PBPRA0162"/>
<dbReference type="KEGG" id="ppr:PBPRA0162"/>
<dbReference type="eggNOG" id="COG3161">
    <property type="taxonomic scope" value="Bacteria"/>
</dbReference>
<dbReference type="HOGENOM" id="CLU_096824_1_1_6"/>
<dbReference type="UniPathway" id="UPA00232"/>
<dbReference type="Proteomes" id="UP000000593">
    <property type="component" value="Chromosome 1"/>
</dbReference>
<dbReference type="GO" id="GO:0005829">
    <property type="term" value="C:cytosol"/>
    <property type="evidence" value="ECO:0007669"/>
    <property type="project" value="TreeGrafter"/>
</dbReference>
<dbReference type="GO" id="GO:0008813">
    <property type="term" value="F:chorismate lyase activity"/>
    <property type="evidence" value="ECO:0007669"/>
    <property type="project" value="UniProtKB-UniRule"/>
</dbReference>
<dbReference type="GO" id="GO:0042866">
    <property type="term" value="P:pyruvate biosynthetic process"/>
    <property type="evidence" value="ECO:0007669"/>
    <property type="project" value="UniProtKB-UniRule"/>
</dbReference>
<dbReference type="GO" id="GO:0006744">
    <property type="term" value="P:ubiquinone biosynthetic process"/>
    <property type="evidence" value="ECO:0007669"/>
    <property type="project" value="UniProtKB-UniRule"/>
</dbReference>
<dbReference type="Gene3D" id="3.40.1410.10">
    <property type="entry name" value="Chorismate lyase-like"/>
    <property type="match status" value="1"/>
</dbReference>
<dbReference type="HAMAP" id="MF_01632">
    <property type="entry name" value="UbiC"/>
    <property type="match status" value="1"/>
</dbReference>
<dbReference type="InterPro" id="IPR007440">
    <property type="entry name" value="Chorismate--pyruvate_lyase"/>
</dbReference>
<dbReference type="InterPro" id="IPR028978">
    <property type="entry name" value="Chorismate_lyase_/UTRA_dom_sf"/>
</dbReference>
<dbReference type="PANTHER" id="PTHR38683">
    <property type="entry name" value="CHORISMATE PYRUVATE-LYASE"/>
    <property type="match status" value="1"/>
</dbReference>
<dbReference type="PANTHER" id="PTHR38683:SF1">
    <property type="entry name" value="CHORISMATE PYRUVATE-LYASE"/>
    <property type="match status" value="1"/>
</dbReference>
<dbReference type="Pfam" id="PF04345">
    <property type="entry name" value="Chor_lyase"/>
    <property type="match status" value="1"/>
</dbReference>
<dbReference type="SUPFAM" id="SSF64288">
    <property type="entry name" value="Chorismate lyase-like"/>
    <property type="match status" value="1"/>
</dbReference>
<evidence type="ECO:0000255" key="1">
    <source>
        <dbReference type="HAMAP-Rule" id="MF_01632"/>
    </source>
</evidence>
<organism>
    <name type="scientific">Photobacterium profundum (strain SS9)</name>
    <dbReference type="NCBI Taxonomy" id="298386"/>
    <lineage>
        <taxon>Bacteria</taxon>
        <taxon>Pseudomonadati</taxon>
        <taxon>Pseudomonadota</taxon>
        <taxon>Gammaproteobacteria</taxon>
        <taxon>Vibrionales</taxon>
        <taxon>Vibrionaceae</taxon>
        <taxon>Photobacterium</taxon>
    </lineage>
</organism>
<comment type="function">
    <text evidence="1">Removes the pyruvyl group from chorismate, with concomitant aromatization of the ring, to provide 4-hydroxybenzoate (4HB) for the ubiquinone pathway.</text>
</comment>
<comment type="catalytic activity">
    <reaction evidence="1">
        <text>chorismate = 4-hydroxybenzoate + pyruvate</text>
        <dbReference type="Rhea" id="RHEA:16505"/>
        <dbReference type="ChEBI" id="CHEBI:15361"/>
        <dbReference type="ChEBI" id="CHEBI:17879"/>
        <dbReference type="ChEBI" id="CHEBI:29748"/>
        <dbReference type="EC" id="4.1.3.40"/>
    </reaction>
</comment>
<comment type="pathway">
    <text evidence="1">Cofactor biosynthesis; ubiquinone biosynthesis.</text>
</comment>
<comment type="subcellular location">
    <subcellularLocation>
        <location evidence="1">Cytoplasm</location>
    </subcellularLocation>
</comment>
<comment type="similarity">
    <text evidence="1">Belongs to the UbiC family.</text>
</comment>
<keyword id="KW-0963">Cytoplasm</keyword>
<keyword id="KW-0456">Lyase</keyword>
<keyword id="KW-0670">Pyruvate</keyword>
<keyword id="KW-1185">Reference proteome</keyword>
<keyword id="KW-0831">Ubiquinone biosynthesis</keyword>
<proteinExistence type="inferred from homology"/>
<feature type="chain" id="PRO_0000240552" description="Probable chorismate pyruvate-lyase">
    <location>
        <begin position="1"/>
        <end position="180"/>
    </location>
</feature>
<feature type="binding site" evidence="1">
    <location>
        <position position="82"/>
    </location>
    <ligand>
        <name>substrate</name>
    </ligand>
</feature>
<feature type="binding site" evidence="1">
    <location>
        <position position="120"/>
    </location>
    <ligand>
        <name>substrate</name>
    </ligand>
</feature>
<feature type="binding site" evidence="1">
    <location>
        <position position="165"/>
    </location>
    <ligand>
        <name>substrate</name>
    </ligand>
</feature>
<reference key="1">
    <citation type="journal article" date="2005" name="Science">
        <title>Life at depth: Photobacterium profundum genome sequence and expression analysis.</title>
        <authorList>
            <person name="Vezzi A."/>
            <person name="Campanaro S."/>
            <person name="D'Angelo M."/>
            <person name="Simonato F."/>
            <person name="Vitulo N."/>
            <person name="Lauro F.M."/>
            <person name="Cestaro A."/>
            <person name="Malacrida G."/>
            <person name="Simionati B."/>
            <person name="Cannata N."/>
            <person name="Romualdi C."/>
            <person name="Bartlett D.H."/>
            <person name="Valle G."/>
        </authorList>
    </citation>
    <scope>NUCLEOTIDE SEQUENCE [LARGE SCALE GENOMIC DNA]</scope>
    <source>
        <strain>ATCC BAA-1253 / SS9</strain>
    </source>
</reference>
<name>UBIC_PHOPR</name>
<gene>
    <name evidence="1" type="primary">ubiC</name>
    <name type="ordered locus">PBPRA0162</name>
</gene>
<protein>
    <recommendedName>
        <fullName evidence="1">Probable chorismate pyruvate-lyase</fullName>
        <shortName evidence="1">CL</shortName>
        <shortName evidence="1">CPL</shortName>
        <ecNumber evidence="1">4.1.3.40</ecNumber>
    </recommendedName>
</protein>